<name>ZWINT_LACTC</name>
<proteinExistence type="inferred from homology"/>
<keyword id="KW-0137">Centromere</keyword>
<keyword id="KW-0158">Chromosome</keyword>
<keyword id="KW-0175">Coiled coil</keyword>
<keyword id="KW-0995">Kinetochore</keyword>
<keyword id="KW-0539">Nucleus</keyword>
<keyword id="KW-1185">Reference proteome</keyword>
<organism>
    <name type="scientific">Lachancea thermotolerans (strain ATCC 56472 / CBS 6340 / NRRL Y-8284)</name>
    <name type="common">Yeast</name>
    <name type="synonym">Kluyveromyces thermotolerans</name>
    <dbReference type="NCBI Taxonomy" id="559295"/>
    <lineage>
        <taxon>Eukaryota</taxon>
        <taxon>Fungi</taxon>
        <taxon>Dikarya</taxon>
        <taxon>Ascomycota</taxon>
        <taxon>Saccharomycotina</taxon>
        <taxon>Saccharomycetes</taxon>
        <taxon>Saccharomycetales</taxon>
        <taxon>Saccharomycetaceae</taxon>
        <taxon>Lachancea</taxon>
    </lineage>
</organism>
<sequence>MADDPTINGLELQLNAAEEHATALTEEALQNQDLHYKEVVEQLKRSVEQLVEDNESLFTAVDLPPEVDPTCISGRILDLAQLTQQLKSTHLQQETLDNFLRYTISSTDILQLESESDERYASVSRAVSQLQDNDIIQLDSEVDQIKQDIRKAGQTIADQREALNELCLETGNLADECHTLLSELEEATRTREMVEKQAAVEVTNDHPVEEMYASWQSLKEELQQESHLRRHLNQLKQSKASLEAILGTKNGNEHKDTNVMQEYASYDAFIRFWISKFTNKEMENLEVFPRSNKFQFTHRGTDVVISLGPRGISRVELYGKGIPLEKIAAARKDVNEEASRGEELYMSINRIIDKIKEHTTVS</sequence>
<evidence type="ECO:0000250" key="1">
    <source>
        <dbReference type="UniProtKB" id="Q04431"/>
    </source>
</evidence>
<evidence type="ECO:0000255" key="2"/>
<evidence type="ECO:0000305" key="3"/>
<protein>
    <recommendedName>
        <fullName evidence="3">Outer kinetochore KNL1 complex subunit KRE28</fullName>
    </recommendedName>
    <alternativeName>
        <fullName>Spindle pole body component KRE28</fullName>
    </alternativeName>
</protein>
<feature type="chain" id="PRO_0000408563" description="Outer kinetochore KNL1 complex subunit KRE28">
    <location>
        <begin position="1"/>
        <end position="362"/>
    </location>
</feature>
<feature type="coiled-coil region" evidence="2">
    <location>
        <begin position="6"/>
        <end position="62"/>
    </location>
</feature>
<feature type="coiled-coil region" evidence="2">
    <location>
        <begin position="131"/>
        <end position="246"/>
    </location>
</feature>
<comment type="function">
    <text evidence="1">Acts as a component of the outer kinetochore KNL1 complex that facilitates microtubule-kinetochore interactions and the spindle assembly checkpoint. Kinetochores, consisting of a centromere-associated inner segment and a microtubule-contacting outer segment, play a crucial role in chromosome segregation by mediating the physical connection between centromeric DNA and spindle microtubules. The outer kinetochore is made up of the ten-subunit KMN network, comprising the MIS12, NDC80 and KNL1 complexes, and auxiliary microtubule-associated components; together they connect the outer kinetochore with the inner kinetochore, bind microtubules, and mediate interactions with mitotic checkpoint proteins that delay anaphase until chromosomes are bioriented on the spindle.</text>
</comment>
<comment type="subunit">
    <text evidence="1">Component of the KNL1/SPC105 complex composed of SPC105 and KRE28. Part of the ten-subunit outer kinetochore KMN network that includes the KNL1, MIS12 and NDC80 complexes.</text>
</comment>
<comment type="subcellular location">
    <subcellularLocation>
        <location evidence="1">Nucleus</location>
    </subcellularLocation>
    <subcellularLocation>
        <location evidence="1">Chromosome</location>
        <location evidence="1">Centromere</location>
        <location evidence="1">Kinetochore</location>
    </subcellularLocation>
</comment>
<comment type="similarity">
    <text evidence="3">Belongs to the KRE28 family.</text>
</comment>
<accession>C5DK07</accession>
<gene>
    <name type="primary">KRE28</name>
    <name type="ordered locus">KLTH0F00836g</name>
</gene>
<dbReference type="EMBL" id="CU928170">
    <property type="protein sequence ID" value="CAR23808.1"/>
    <property type="molecule type" value="Genomic_DNA"/>
</dbReference>
<dbReference type="RefSeq" id="XP_002554245.1">
    <property type="nucleotide sequence ID" value="XM_002554199.1"/>
</dbReference>
<dbReference type="SMR" id="C5DK07"/>
<dbReference type="FunCoup" id="C5DK07">
    <property type="interactions" value="34"/>
</dbReference>
<dbReference type="STRING" id="559295.C5DK07"/>
<dbReference type="GeneID" id="8292436"/>
<dbReference type="KEGG" id="lth:KLTH0F00836g"/>
<dbReference type="eggNOG" id="ENOG502S19U">
    <property type="taxonomic scope" value="Eukaryota"/>
</dbReference>
<dbReference type="HOGENOM" id="CLU_062083_0_0_1"/>
<dbReference type="InParanoid" id="C5DK07"/>
<dbReference type="OMA" id="GNEIDEC"/>
<dbReference type="OrthoDB" id="4065660at2759"/>
<dbReference type="Proteomes" id="UP000002036">
    <property type="component" value="Chromosome F"/>
</dbReference>
<dbReference type="GO" id="GO:0000776">
    <property type="term" value="C:kinetochore"/>
    <property type="evidence" value="ECO:0000250"/>
    <property type="project" value="UniProtKB"/>
</dbReference>
<dbReference type="GO" id="GO:0180019">
    <property type="term" value="C:Knl1/Spc105 complex"/>
    <property type="evidence" value="ECO:0000250"/>
    <property type="project" value="UniProtKB"/>
</dbReference>
<dbReference type="GO" id="GO:0005634">
    <property type="term" value="C:nucleus"/>
    <property type="evidence" value="ECO:0007669"/>
    <property type="project" value="UniProtKB-SubCell"/>
</dbReference>
<dbReference type="GO" id="GO:0031619">
    <property type="term" value="P:homologous chromosome orientation in meiotic metaphase I"/>
    <property type="evidence" value="ECO:0000250"/>
    <property type="project" value="UniProtKB"/>
</dbReference>
<dbReference type="GO" id="GO:1905325">
    <property type="term" value="P:regulation of meiosis I spindle assembly checkpoint"/>
    <property type="evidence" value="ECO:0000250"/>
    <property type="project" value="UniProtKB"/>
</dbReference>
<dbReference type="InterPro" id="IPR031361">
    <property type="entry name" value="Kre28"/>
</dbReference>
<dbReference type="Pfam" id="PF17097">
    <property type="entry name" value="Kre28"/>
    <property type="match status" value="1"/>
</dbReference>
<reference key="1">
    <citation type="journal article" date="2009" name="Genome Res.">
        <title>Comparative genomics of protoploid Saccharomycetaceae.</title>
        <authorList>
            <consortium name="The Genolevures Consortium"/>
            <person name="Souciet J.-L."/>
            <person name="Dujon B."/>
            <person name="Gaillardin C."/>
            <person name="Johnston M."/>
            <person name="Baret P.V."/>
            <person name="Cliften P."/>
            <person name="Sherman D.J."/>
            <person name="Weissenbach J."/>
            <person name="Westhof E."/>
            <person name="Wincker P."/>
            <person name="Jubin C."/>
            <person name="Poulain J."/>
            <person name="Barbe V."/>
            <person name="Segurens B."/>
            <person name="Artiguenave F."/>
            <person name="Anthouard V."/>
            <person name="Vacherie B."/>
            <person name="Val M.-E."/>
            <person name="Fulton R.S."/>
            <person name="Minx P."/>
            <person name="Wilson R."/>
            <person name="Durrens P."/>
            <person name="Jean G."/>
            <person name="Marck C."/>
            <person name="Martin T."/>
            <person name="Nikolski M."/>
            <person name="Rolland T."/>
            <person name="Seret M.-L."/>
            <person name="Casaregola S."/>
            <person name="Despons L."/>
            <person name="Fairhead C."/>
            <person name="Fischer G."/>
            <person name="Lafontaine I."/>
            <person name="Leh V."/>
            <person name="Lemaire M."/>
            <person name="de Montigny J."/>
            <person name="Neuveglise C."/>
            <person name="Thierry A."/>
            <person name="Blanc-Lenfle I."/>
            <person name="Bleykasten C."/>
            <person name="Diffels J."/>
            <person name="Fritsch E."/>
            <person name="Frangeul L."/>
            <person name="Goeffon A."/>
            <person name="Jauniaux N."/>
            <person name="Kachouri-Lafond R."/>
            <person name="Payen C."/>
            <person name="Potier S."/>
            <person name="Pribylova L."/>
            <person name="Ozanne C."/>
            <person name="Richard G.-F."/>
            <person name="Sacerdot C."/>
            <person name="Straub M.-L."/>
            <person name="Talla E."/>
        </authorList>
    </citation>
    <scope>NUCLEOTIDE SEQUENCE [LARGE SCALE GENOMIC DNA]</scope>
    <source>
        <strain>ATCC 56472 / CBS 6340 / NRRL Y-8284</strain>
    </source>
</reference>